<keyword id="KW-0963">Cytoplasm</keyword>
<keyword id="KW-0342">GTP-binding</keyword>
<keyword id="KW-0436">Ligase</keyword>
<keyword id="KW-0460">Magnesium</keyword>
<keyword id="KW-0479">Metal-binding</keyword>
<keyword id="KW-0547">Nucleotide-binding</keyword>
<keyword id="KW-0658">Purine biosynthesis</keyword>
<keyword id="KW-1185">Reference proteome</keyword>
<gene>
    <name type="ORF">GI22153</name>
</gene>
<evidence type="ECO:0000250" key="1"/>
<evidence type="ECO:0000255" key="2">
    <source>
        <dbReference type="HAMAP-Rule" id="MF_03125"/>
    </source>
</evidence>
<comment type="function">
    <text evidence="1">Plays an important role in the de novo pathway and in the salvage pathway of purine nucleotide biosynthesis. Catalyzes the first committed step in the biosynthesis of AMP from IMP (By similarity).</text>
</comment>
<comment type="catalytic activity">
    <reaction evidence="2">
        <text>IMP + L-aspartate + GTP = N(6)-(1,2-dicarboxyethyl)-AMP + GDP + phosphate + 2 H(+)</text>
        <dbReference type="Rhea" id="RHEA:15753"/>
        <dbReference type="ChEBI" id="CHEBI:15378"/>
        <dbReference type="ChEBI" id="CHEBI:29991"/>
        <dbReference type="ChEBI" id="CHEBI:37565"/>
        <dbReference type="ChEBI" id="CHEBI:43474"/>
        <dbReference type="ChEBI" id="CHEBI:57567"/>
        <dbReference type="ChEBI" id="CHEBI:58053"/>
        <dbReference type="ChEBI" id="CHEBI:58189"/>
        <dbReference type="EC" id="6.3.4.4"/>
    </reaction>
</comment>
<comment type="cofactor">
    <cofactor evidence="2">
        <name>Mg(2+)</name>
        <dbReference type="ChEBI" id="CHEBI:18420"/>
    </cofactor>
    <text evidence="2">Binds 1 Mg(2+) ion per subunit.</text>
</comment>
<comment type="pathway">
    <text evidence="2">Purine metabolism; AMP biosynthesis via de novo pathway; AMP from IMP: step 1/2.</text>
</comment>
<comment type="subunit">
    <text evidence="2">Homodimer.</text>
</comment>
<comment type="subcellular location">
    <subcellularLocation>
        <location evidence="2">Cytoplasm</location>
    </subcellularLocation>
</comment>
<comment type="similarity">
    <text evidence="2">Belongs to the adenylosuccinate synthetase family.</text>
</comment>
<accession>B4K8W7</accession>
<proteinExistence type="inferred from homology"/>
<name>PURA_DROMO</name>
<dbReference type="EC" id="6.3.4.4" evidence="2"/>
<dbReference type="EMBL" id="CH933806">
    <property type="protein sequence ID" value="EDW16564.1"/>
    <property type="molecule type" value="Genomic_DNA"/>
</dbReference>
<dbReference type="SMR" id="B4K8W7"/>
<dbReference type="FunCoup" id="B4K8W7">
    <property type="interactions" value="1450"/>
</dbReference>
<dbReference type="EnsemblMetazoa" id="FBtr0172878">
    <property type="protein sequence ID" value="FBpp0171370"/>
    <property type="gene ID" value="FBgn0144882"/>
</dbReference>
<dbReference type="EnsemblMetazoa" id="XM_002001067.4">
    <property type="protein sequence ID" value="XP_002001103.1"/>
    <property type="gene ID" value="LOC6575085"/>
</dbReference>
<dbReference type="GeneID" id="6575085"/>
<dbReference type="KEGG" id="dmo:Dmoj_GI22153"/>
<dbReference type="eggNOG" id="KOG1355">
    <property type="taxonomic scope" value="Eukaryota"/>
</dbReference>
<dbReference type="HOGENOM" id="CLU_029848_3_0_1"/>
<dbReference type="InParanoid" id="B4K8W7"/>
<dbReference type="OMA" id="QSYVRFL"/>
<dbReference type="OrthoDB" id="10265645at2759"/>
<dbReference type="PhylomeDB" id="B4K8W7"/>
<dbReference type="UniPathway" id="UPA00075">
    <property type="reaction ID" value="UER00335"/>
</dbReference>
<dbReference type="Proteomes" id="UP000009192">
    <property type="component" value="Unassembled WGS sequence"/>
</dbReference>
<dbReference type="GO" id="GO:0005737">
    <property type="term" value="C:cytoplasm"/>
    <property type="evidence" value="ECO:0007669"/>
    <property type="project" value="UniProtKB-SubCell"/>
</dbReference>
<dbReference type="GO" id="GO:0004019">
    <property type="term" value="F:adenylosuccinate synthase activity"/>
    <property type="evidence" value="ECO:0007669"/>
    <property type="project" value="UniProtKB-UniRule"/>
</dbReference>
<dbReference type="GO" id="GO:0005525">
    <property type="term" value="F:GTP binding"/>
    <property type="evidence" value="ECO:0007669"/>
    <property type="project" value="UniProtKB-UniRule"/>
</dbReference>
<dbReference type="GO" id="GO:0000287">
    <property type="term" value="F:magnesium ion binding"/>
    <property type="evidence" value="ECO:0007669"/>
    <property type="project" value="UniProtKB-UniRule"/>
</dbReference>
<dbReference type="GO" id="GO:0044208">
    <property type="term" value="P:'de novo' AMP biosynthetic process"/>
    <property type="evidence" value="ECO:0007669"/>
    <property type="project" value="UniProtKB-UniRule"/>
</dbReference>
<dbReference type="GO" id="GO:0046040">
    <property type="term" value="P:IMP metabolic process"/>
    <property type="evidence" value="ECO:0007669"/>
    <property type="project" value="TreeGrafter"/>
</dbReference>
<dbReference type="CDD" id="cd03108">
    <property type="entry name" value="AdSS"/>
    <property type="match status" value="1"/>
</dbReference>
<dbReference type="FunFam" id="3.90.170.10:FF:000001">
    <property type="entry name" value="Adenylosuccinate synthetase"/>
    <property type="match status" value="1"/>
</dbReference>
<dbReference type="FunFam" id="1.10.300.10:FF:000002">
    <property type="entry name" value="Adenylosuccinate synthetase, chloroplastic"/>
    <property type="match status" value="1"/>
</dbReference>
<dbReference type="Gene3D" id="3.40.440.10">
    <property type="entry name" value="Adenylosuccinate Synthetase, subunit A, domain 1"/>
    <property type="match status" value="1"/>
</dbReference>
<dbReference type="Gene3D" id="1.10.300.10">
    <property type="entry name" value="Adenylosuccinate Synthetase, subunit A, domain 2"/>
    <property type="match status" value="1"/>
</dbReference>
<dbReference type="Gene3D" id="3.90.170.10">
    <property type="entry name" value="Adenylosuccinate Synthetase, subunit A, domain 3"/>
    <property type="match status" value="1"/>
</dbReference>
<dbReference type="HAMAP" id="MF_00011">
    <property type="entry name" value="Adenylosucc_synth"/>
    <property type="match status" value="1"/>
</dbReference>
<dbReference type="InterPro" id="IPR018220">
    <property type="entry name" value="Adenylosuccin_syn_GTP-bd"/>
</dbReference>
<dbReference type="InterPro" id="IPR033128">
    <property type="entry name" value="Adenylosuccin_syn_Lys_AS"/>
</dbReference>
<dbReference type="InterPro" id="IPR042109">
    <property type="entry name" value="Adenylosuccinate_synth_dom1"/>
</dbReference>
<dbReference type="InterPro" id="IPR042110">
    <property type="entry name" value="Adenylosuccinate_synth_dom2"/>
</dbReference>
<dbReference type="InterPro" id="IPR042111">
    <property type="entry name" value="Adenylosuccinate_synth_dom3"/>
</dbReference>
<dbReference type="InterPro" id="IPR001114">
    <property type="entry name" value="Adenylosuccinate_synthetase"/>
</dbReference>
<dbReference type="InterPro" id="IPR027417">
    <property type="entry name" value="P-loop_NTPase"/>
</dbReference>
<dbReference type="NCBIfam" id="NF002223">
    <property type="entry name" value="PRK01117.1"/>
    <property type="match status" value="1"/>
</dbReference>
<dbReference type="NCBIfam" id="TIGR00184">
    <property type="entry name" value="purA"/>
    <property type="match status" value="1"/>
</dbReference>
<dbReference type="PANTHER" id="PTHR11846">
    <property type="entry name" value="ADENYLOSUCCINATE SYNTHETASE"/>
    <property type="match status" value="1"/>
</dbReference>
<dbReference type="PANTHER" id="PTHR11846:SF0">
    <property type="entry name" value="ADENYLOSUCCINATE SYNTHETASE"/>
    <property type="match status" value="1"/>
</dbReference>
<dbReference type="Pfam" id="PF00709">
    <property type="entry name" value="Adenylsucc_synt"/>
    <property type="match status" value="1"/>
</dbReference>
<dbReference type="SMART" id="SM00788">
    <property type="entry name" value="Adenylsucc_synt"/>
    <property type="match status" value="1"/>
</dbReference>
<dbReference type="SUPFAM" id="SSF52540">
    <property type="entry name" value="P-loop containing nucleoside triphosphate hydrolases"/>
    <property type="match status" value="1"/>
</dbReference>
<dbReference type="PROSITE" id="PS01266">
    <property type="entry name" value="ADENYLOSUCCIN_SYN_1"/>
    <property type="match status" value="1"/>
</dbReference>
<dbReference type="PROSITE" id="PS00513">
    <property type="entry name" value="ADENYLOSUCCIN_SYN_2"/>
    <property type="match status" value="1"/>
</dbReference>
<organism>
    <name type="scientific">Drosophila mojavensis</name>
    <name type="common">Fruit fly</name>
    <dbReference type="NCBI Taxonomy" id="7230"/>
    <lineage>
        <taxon>Eukaryota</taxon>
        <taxon>Metazoa</taxon>
        <taxon>Ecdysozoa</taxon>
        <taxon>Arthropoda</taxon>
        <taxon>Hexapoda</taxon>
        <taxon>Insecta</taxon>
        <taxon>Pterygota</taxon>
        <taxon>Neoptera</taxon>
        <taxon>Endopterygota</taxon>
        <taxon>Diptera</taxon>
        <taxon>Brachycera</taxon>
        <taxon>Muscomorpha</taxon>
        <taxon>Ephydroidea</taxon>
        <taxon>Drosophilidae</taxon>
        <taxon>Drosophila</taxon>
    </lineage>
</organism>
<sequence length="448" mass="49341">MSTTSAINGNHYEQLHQGRTNMYKSKVNVVLGAQWGDEGKGKVVDMLASEVDIVCRCQGGNNAGHTVVANGTEFDFHLLPSGVVNEKCISVIGNGVVIHLPSLFDEVLKNEAKGLQQLENRLIISDRAHLVFDFHQQVDGMQEAEKGGKSLGTTKKGIGPAYSSKATRNGIRVGELLGDFNLFSEKFKSIVNTHLRLFPSIKVDVDAELARYKDYVDKVRPYVKDTICFLHTALRNGKTILVEGANAAMLDIDFGTYPYVTSSNCSIGGVLTGLGLPPQTIGEVIGVVKAYTTRVGDGPFPTEQLNEIGDLLQTRGFEIGVTTKRKRRCGWLDIPLLKYTSLVNGYTCICLTKLDILDTLPEIKVGVNYKRSNGEKLDHFPGTISELSDIEVEYAVLPGWQTSTEHIRNFKELPENAQNYVRFLESQLSVPVRWVGVGKGRESIINVH</sequence>
<feature type="chain" id="PRO_0000399261" description="Adenylosuccinate synthetase">
    <location>
        <begin position="1"/>
        <end position="448"/>
    </location>
</feature>
<feature type="active site" description="Proton acceptor" evidence="2">
    <location>
        <position position="37"/>
    </location>
</feature>
<feature type="active site" description="Proton donor" evidence="2">
    <location>
        <position position="65"/>
    </location>
</feature>
<feature type="binding site" evidence="2">
    <location>
        <begin position="36"/>
        <end position="42"/>
    </location>
    <ligand>
        <name>GTP</name>
        <dbReference type="ChEBI" id="CHEBI:37565"/>
    </ligand>
</feature>
<feature type="binding site" description="in other chain" evidence="2">
    <location>
        <begin position="37"/>
        <end position="40"/>
    </location>
    <ligand>
        <name>IMP</name>
        <dbReference type="ChEBI" id="CHEBI:58053"/>
        <note>ligand shared between dimeric partners</note>
    </ligand>
</feature>
<feature type="binding site" evidence="2">
    <location>
        <position position="37"/>
    </location>
    <ligand>
        <name>Mg(2+)</name>
        <dbReference type="ChEBI" id="CHEBI:18420"/>
    </ligand>
</feature>
<feature type="binding site" description="in other chain" evidence="2">
    <location>
        <begin position="62"/>
        <end position="65"/>
    </location>
    <ligand>
        <name>IMP</name>
        <dbReference type="ChEBI" id="CHEBI:58053"/>
        <note>ligand shared between dimeric partners</note>
    </ligand>
</feature>
<feature type="binding site" evidence="2">
    <location>
        <begin position="64"/>
        <end position="66"/>
    </location>
    <ligand>
        <name>GTP</name>
        <dbReference type="ChEBI" id="CHEBI:37565"/>
    </ligand>
</feature>
<feature type="binding site" evidence="2">
    <location>
        <position position="64"/>
    </location>
    <ligand>
        <name>Mg(2+)</name>
        <dbReference type="ChEBI" id="CHEBI:18420"/>
    </ligand>
</feature>
<feature type="binding site" description="in other chain" evidence="2">
    <location>
        <position position="154"/>
    </location>
    <ligand>
        <name>IMP</name>
        <dbReference type="ChEBI" id="CHEBI:58053"/>
        <note>ligand shared between dimeric partners</note>
    </ligand>
</feature>
<feature type="binding site" evidence="2">
    <location>
        <position position="168"/>
    </location>
    <ligand>
        <name>IMP</name>
        <dbReference type="ChEBI" id="CHEBI:58053"/>
        <note>ligand shared between dimeric partners</note>
    </ligand>
</feature>
<feature type="binding site" description="in other chain" evidence="2">
    <location>
        <position position="246"/>
    </location>
    <ligand>
        <name>IMP</name>
        <dbReference type="ChEBI" id="CHEBI:58053"/>
        <note>ligand shared between dimeric partners</note>
    </ligand>
</feature>
<feature type="binding site" description="in other chain" evidence="2">
    <location>
        <position position="261"/>
    </location>
    <ligand>
        <name>IMP</name>
        <dbReference type="ChEBI" id="CHEBI:58053"/>
        <note>ligand shared between dimeric partners</note>
    </ligand>
</feature>
<feature type="binding site" evidence="2">
    <location>
        <begin position="321"/>
        <end position="327"/>
    </location>
    <ligand>
        <name>substrate</name>
    </ligand>
</feature>
<feature type="binding site" description="in other chain" evidence="2">
    <location>
        <position position="325"/>
    </location>
    <ligand>
        <name>IMP</name>
        <dbReference type="ChEBI" id="CHEBI:58053"/>
        <note>ligand shared between dimeric partners</note>
    </ligand>
</feature>
<feature type="binding site" evidence="2">
    <location>
        <position position="327"/>
    </location>
    <ligand>
        <name>GTP</name>
        <dbReference type="ChEBI" id="CHEBI:37565"/>
    </ligand>
</feature>
<feature type="binding site" evidence="2">
    <location>
        <begin position="353"/>
        <end position="355"/>
    </location>
    <ligand>
        <name>GTP</name>
        <dbReference type="ChEBI" id="CHEBI:37565"/>
    </ligand>
</feature>
<feature type="binding site" evidence="2">
    <location>
        <begin position="436"/>
        <end position="438"/>
    </location>
    <ligand>
        <name>GTP</name>
        <dbReference type="ChEBI" id="CHEBI:37565"/>
    </ligand>
</feature>
<reference key="1">
    <citation type="journal article" date="2007" name="Nature">
        <title>Evolution of genes and genomes on the Drosophila phylogeny.</title>
        <authorList>
            <consortium name="Drosophila 12 genomes consortium"/>
        </authorList>
    </citation>
    <scope>NUCLEOTIDE SEQUENCE [LARGE SCALE GENOMIC DNA]</scope>
    <source>
        <strain>Tucson 15081-1352.22</strain>
    </source>
</reference>
<protein>
    <recommendedName>
        <fullName evidence="2">Adenylosuccinate synthetase</fullName>
        <shortName evidence="2">AMPSase</shortName>
        <shortName evidence="2">AdSS</shortName>
        <ecNumber evidence="2">6.3.4.4</ecNumber>
    </recommendedName>
    <alternativeName>
        <fullName evidence="2">IMP--aspartate ligase</fullName>
    </alternativeName>
</protein>